<comment type="function">
    <text evidence="1">Forms part of the ribosomal stalk which helps the ribosome interact with GTP-bound translation factors.</text>
</comment>
<comment type="subunit">
    <text evidence="1">Part of the ribosomal stalk of the 50S ribosomal subunit. Interacts with L10 and the large rRNA to form the base of the stalk. L10 forms an elongated spine to which L12 dimers bind in a sequential fashion forming a multimeric L10(L12)X complex.</text>
</comment>
<comment type="PTM">
    <text evidence="1">One or more lysine residues are methylated.</text>
</comment>
<comment type="similarity">
    <text evidence="1">Belongs to the universal ribosomal protein uL11 family.</text>
</comment>
<accession>B5Z8J9</accession>
<gene>
    <name evidence="1" type="primary">rplK</name>
    <name type="ordered locus">HPG27_1148</name>
</gene>
<protein>
    <recommendedName>
        <fullName evidence="1">Large ribosomal subunit protein uL11</fullName>
    </recommendedName>
    <alternativeName>
        <fullName evidence="2">50S ribosomal protein L11</fullName>
    </alternativeName>
</protein>
<evidence type="ECO:0000255" key="1">
    <source>
        <dbReference type="HAMAP-Rule" id="MF_00736"/>
    </source>
</evidence>
<evidence type="ECO:0000305" key="2"/>
<sequence length="141" mass="15329">MAKKVVGEIKLQIPAGKANPSPPVGPALGQRGVNIMEFCKAFNERTKDMGSFNIPVIITVYQDKSFTFITKKPPVTDLIKKASGVEKGSDNPLKNKIAKLTHKQVEEIAQLKMEDLNTSTMEAAKKIVMGSARSMGVEVVD</sequence>
<dbReference type="EMBL" id="CP001173">
    <property type="protein sequence ID" value="ACI27898.1"/>
    <property type="molecule type" value="Genomic_DNA"/>
</dbReference>
<dbReference type="RefSeq" id="WP_001085997.1">
    <property type="nucleotide sequence ID" value="NC_011333.1"/>
</dbReference>
<dbReference type="SMR" id="B5Z8J9"/>
<dbReference type="GeneID" id="93237670"/>
<dbReference type="KEGG" id="hpg:HPG27_1148"/>
<dbReference type="HOGENOM" id="CLU_074237_2_0_7"/>
<dbReference type="Proteomes" id="UP000001735">
    <property type="component" value="Chromosome"/>
</dbReference>
<dbReference type="GO" id="GO:0022625">
    <property type="term" value="C:cytosolic large ribosomal subunit"/>
    <property type="evidence" value="ECO:0007669"/>
    <property type="project" value="TreeGrafter"/>
</dbReference>
<dbReference type="GO" id="GO:0070180">
    <property type="term" value="F:large ribosomal subunit rRNA binding"/>
    <property type="evidence" value="ECO:0007669"/>
    <property type="project" value="UniProtKB-UniRule"/>
</dbReference>
<dbReference type="GO" id="GO:0003735">
    <property type="term" value="F:structural constituent of ribosome"/>
    <property type="evidence" value="ECO:0007669"/>
    <property type="project" value="InterPro"/>
</dbReference>
<dbReference type="GO" id="GO:0006412">
    <property type="term" value="P:translation"/>
    <property type="evidence" value="ECO:0007669"/>
    <property type="project" value="UniProtKB-UniRule"/>
</dbReference>
<dbReference type="CDD" id="cd00349">
    <property type="entry name" value="Ribosomal_L11"/>
    <property type="match status" value="1"/>
</dbReference>
<dbReference type="FunFam" id="1.10.10.250:FF:000001">
    <property type="entry name" value="50S ribosomal protein L11"/>
    <property type="match status" value="1"/>
</dbReference>
<dbReference type="FunFam" id="3.30.1550.10:FF:000001">
    <property type="entry name" value="50S ribosomal protein L11"/>
    <property type="match status" value="1"/>
</dbReference>
<dbReference type="Gene3D" id="1.10.10.250">
    <property type="entry name" value="Ribosomal protein L11, C-terminal domain"/>
    <property type="match status" value="1"/>
</dbReference>
<dbReference type="Gene3D" id="3.30.1550.10">
    <property type="entry name" value="Ribosomal protein L11/L12, N-terminal domain"/>
    <property type="match status" value="1"/>
</dbReference>
<dbReference type="HAMAP" id="MF_00736">
    <property type="entry name" value="Ribosomal_uL11"/>
    <property type="match status" value="1"/>
</dbReference>
<dbReference type="InterPro" id="IPR000911">
    <property type="entry name" value="Ribosomal_uL11"/>
</dbReference>
<dbReference type="InterPro" id="IPR006519">
    <property type="entry name" value="Ribosomal_uL11_bac-typ"/>
</dbReference>
<dbReference type="InterPro" id="IPR020783">
    <property type="entry name" value="Ribosomal_uL11_C"/>
</dbReference>
<dbReference type="InterPro" id="IPR036769">
    <property type="entry name" value="Ribosomal_uL11_C_sf"/>
</dbReference>
<dbReference type="InterPro" id="IPR020785">
    <property type="entry name" value="Ribosomal_uL11_CS"/>
</dbReference>
<dbReference type="InterPro" id="IPR020784">
    <property type="entry name" value="Ribosomal_uL11_N"/>
</dbReference>
<dbReference type="InterPro" id="IPR036796">
    <property type="entry name" value="Ribosomal_uL11_N_sf"/>
</dbReference>
<dbReference type="NCBIfam" id="TIGR01632">
    <property type="entry name" value="L11_bact"/>
    <property type="match status" value="1"/>
</dbReference>
<dbReference type="PANTHER" id="PTHR11661">
    <property type="entry name" value="60S RIBOSOMAL PROTEIN L12"/>
    <property type="match status" value="1"/>
</dbReference>
<dbReference type="PANTHER" id="PTHR11661:SF1">
    <property type="entry name" value="LARGE RIBOSOMAL SUBUNIT PROTEIN UL11M"/>
    <property type="match status" value="1"/>
</dbReference>
<dbReference type="Pfam" id="PF00298">
    <property type="entry name" value="Ribosomal_L11"/>
    <property type="match status" value="1"/>
</dbReference>
<dbReference type="Pfam" id="PF03946">
    <property type="entry name" value="Ribosomal_L11_N"/>
    <property type="match status" value="1"/>
</dbReference>
<dbReference type="SMART" id="SM00649">
    <property type="entry name" value="RL11"/>
    <property type="match status" value="1"/>
</dbReference>
<dbReference type="SUPFAM" id="SSF54747">
    <property type="entry name" value="Ribosomal L11/L12e N-terminal domain"/>
    <property type="match status" value="1"/>
</dbReference>
<dbReference type="SUPFAM" id="SSF46906">
    <property type="entry name" value="Ribosomal protein L11, C-terminal domain"/>
    <property type="match status" value="1"/>
</dbReference>
<dbReference type="PROSITE" id="PS00359">
    <property type="entry name" value="RIBOSOMAL_L11"/>
    <property type="match status" value="1"/>
</dbReference>
<name>RL11_HELPG</name>
<proteinExistence type="inferred from homology"/>
<keyword id="KW-0488">Methylation</keyword>
<keyword id="KW-1185">Reference proteome</keyword>
<keyword id="KW-0687">Ribonucleoprotein</keyword>
<keyword id="KW-0689">Ribosomal protein</keyword>
<keyword id="KW-0694">RNA-binding</keyword>
<keyword id="KW-0699">rRNA-binding</keyword>
<organism>
    <name type="scientific">Helicobacter pylori (strain G27)</name>
    <dbReference type="NCBI Taxonomy" id="563041"/>
    <lineage>
        <taxon>Bacteria</taxon>
        <taxon>Pseudomonadati</taxon>
        <taxon>Campylobacterota</taxon>
        <taxon>Epsilonproteobacteria</taxon>
        <taxon>Campylobacterales</taxon>
        <taxon>Helicobacteraceae</taxon>
        <taxon>Helicobacter</taxon>
    </lineage>
</organism>
<reference key="1">
    <citation type="journal article" date="2009" name="J. Bacteriol.">
        <title>The complete genome sequence of Helicobacter pylori strain G27.</title>
        <authorList>
            <person name="Baltrus D.A."/>
            <person name="Amieva M.R."/>
            <person name="Covacci A."/>
            <person name="Lowe T.M."/>
            <person name="Merrell D.S."/>
            <person name="Ottemann K.M."/>
            <person name="Stein M."/>
            <person name="Salama N.R."/>
            <person name="Guillemin K."/>
        </authorList>
    </citation>
    <scope>NUCLEOTIDE SEQUENCE [LARGE SCALE GENOMIC DNA]</scope>
    <source>
        <strain>G27</strain>
    </source>
</reference>
<feature type="chain" id="PRO_1000195648" description="Large ribosomal subunit protein uL11">
    <location>
        <begin position="1"/>
        <end position="141"/>
    </location>
</feature>